<dbReference type="EC" id="4.1.1.37" evidence="1"/>
<dbReference type="EMBL" id="CP000155">
    <property type="protein sequence ID" value="ABC32614.1"/>
    <property type="molecule type" value="Genomic_DNA"/>
</dbReference>
<dbReference type="RefSeq" id="WP_011399672.1">
    <property type="nucleotide sequence ID" value="NC_007645.1"/>
</dbReference>
<dbReference type="SMR" id="Q2S9R0"/>
<dbReference type="STRING" id="349521.HCH_05963"/>
<dbReference type="KEGG" id="hch:HCH_05963"/>
<dbReference type="eggNOG" id="COG0407">
    <property type="taxonomic scope" value="Bacteria"/>
</dbReference>
<dbReference type="HOGENOM" id="CLU_040933_0_0_6"/>
<dbReference type="OrthoDB" id="9806656at2"/>
<dbReference type="UniPathway" id="UPA00251">
    <property type="reaction ID" value="UER00321"/>
</dbReference>
<dbReference type="Proteomes" id="UP000000238">
    <property type="component" value="Chromosome"/>
</dbReference>
<dbReference type="GO" id="GO:0005829">
    <property type="term" value="C:cytosol"/>
    <property type="evidence" value="ECO:0007669"/>
    <property type="project" value="TreeGrafter"/>
</dbReference>
<dbReference type="GO" id="GO:0004853">
    <property type="term" value="F:uroporphyrinogen decarboxylase activity"/>
    <property type="evidence" value="ECO:0007669"/>
    <property type="project" value="UniProtKB-UniRule"/>
</dbReference>
<dbReference type="GO" id="GO:0019353">
    <property type="term" value="P:protoporphyrinogen IX biosynthetic process from glutamate"/>
    <property type="evidence" value="ECO:0007669"/>
    <property type="project" value="TreeGrafter"/>
</dbReference>
<dbReference type="CDD" id="cd00717">
    <property type="entry name" value="URO-D"/>
    <property type="match status" value="1"/>
</dbReference>
<dbReference type="FunFam" id="3.20.20.210:FF:000001">
    <property type="entry name" value="Uroporphyrinogen decarboxylase"/>
    <property type="match status" value="1"/>
</dbReference>
<dbReference type="Gene3D" id="3.20.20.210">
    <property type="match status" value="1"/>
</dbReference>
<dbReference type="HAMAP" id="MF_00218">
    <property type="entry name" value="URO_D"/>
    <property type="match status" value="1"/>
</dbReference>
<dbReference type="InterPro" id="IPR038071">
    <property type="entry name" value="UROD/MetE-like_sf"/>
</dbReference>
<dbReference type="InterPro" id="IPR006361">
    <property type="entry name" value="Uroporphyrinogen_deCO2ase_HemE"/>
</dbReference>
<dbReference type="InterPro" id="IPR000257">
    <property type="entry name" value="Uroporphyrinogen_deCOase"/>
</dbReference>
<dbReference type="NCBIfam" id="TIGR01464">
    <property type="entry name" value="hemE"/>
    <property type="match status" value="1"/>
</dbReference>
<dbReference type="PANTHER" id="PTHR21091">
    <property type="entry name" value="METHYLTETRAHYDROFOLATE:HOMOCYSTEINE METHYLTRANSFERASE RELATED"/>
    <property type="match status" value="1"/>
</dbReference>
<dbReference type="PANTHER" id="PTHR21091:SF169">
    <property type="entry name" value="UROPORPHYRINOGEN DECARBOXYLASE"/>
    <property type="match status" value="1"/>
</dbReference>
<dbReference type="Pfam" id="PF01208">
    <property type="entry name" value="URO-D"/>
    <property type="match status" value="1"/>
</dbReference>
<dbReference type="SUPFAM" id="SSF51726">
    <property type="entry name" value="UROD/MetE-like"/>
    <property type="match status" value="1"/>
</dbReference>
<dbReference type="PROSITE" id="PS00906">
    <property type="entry name" value="UROD_1"/>
    <property type="match status" value="1"/>
</dbReference>
<dbReference type="PROSITE" id="PS00907">
    <property type="entry name" value="UROD_2"/>
    <property type="match status" value="1"/>
</dbReference>
<evidence type="ECO:0000255" key="1">
    <source>
        <dbReference type="HAMAP-Rule" id="MF_00218"/>
    </source>
</evidence>
<organism>
    <name type="scientific">Hahella chejuensis (strain KCTC 2396)</name>
    <dbReference type="NCBI Taxonomy" id="349521"/>
    <lineage>
        <taxon>Bacteria</taxon>
        <taxon>Pseudomonadati</taxon>
        <taxon>Pseudomonadota</taxon>
        <taxon>Gammaproteobacteria</taxon>
        <taxon>Oceanospirillales</taxon>
        <taxon>Hahellaceae</taxon>
        <taxon>Hahella</taxon>
    </lineage>
</organism>
<accession>Q2S9R0</accession>
<reference key="1">
    <citation type="journal article" date="2005" name="Nucleic Acids Res.">
        <title>Genomic blueprint of Hahella chejuensis, a marine microbe producing an algicidal agent.</title>
        <authorList>
            <person name="Jeong H."/>
            <person name="Yim J.H."/>
            <person name="Lee C."/>
            <person name="Choi S.-H."/>
            <person name="Park Y.K."/>
            <person name="Yoon S.H."/>
            <person name="Hur C.-G."/>
            <person name="Kang H.-Y."/>
            <person name="Kim D."/>
            <person name="Lee H.H."/>
            <person name="Park K.H."/>
            <person name="Park S.-H."/>
            <person name="Park H.-S."/>
            <person name="Lee H.K."/>
            <person name="Oh T.K."/>
            <person name="Kim J.F."/>
        </authorList>
    </citation>
    <scope>NUCLEOTIDE SEQUENCE [LARGE SCALE GENOMIC DNA]</scope>
    <source>
        <strain>KCTC 2396</strain>
    </source>
</reference>
<proteinExistence type="inferred from homology"/>
<keyword id="KW-0963">Cytoplasm</keyword>
<keyword id="KW-0210">Decarboxylase</keyword>
<keyword id="KW-0456">Lyase</keyword>
<keyword id="KW-0627">Porphyrin biosynthesis</keyword>
<keyword id="KW-1185">Reference proteome</keyword>
<name>DCUP_HAHCH</name>
<feature type="chain" id="PRO_1000023911" description="Uroporphyrinogen decarboxylase">
    <location>
        <begin position="1"/>
        <end position="356"/>
    </location>
</feature>
<feature type="binding site" evidence="1">
    <location>
        <begin position="27"/>
        <end position="31"/>
    </location>
    <ligand>
        <name>substrate</name>
    </ligand>
</feature>
<feature type="binding site" evidence="1">
    <location>
        <position position="77"/>
    </location>
    <ligand>
        <name>substrate</name>
    </ligand>
</feature>
<feature type="binding site" evidence="1">
    <location>
        <position position="154"/>
    </location>
    <ligand>
        <name>substrate</name>
    </ligand>
</feature>
<feature type="binding site" evidence="1">
    <location>
        <position position="209"/>
    </location>
    <ligand>
        <name>substrate</name>
    </ligand>
</feature>
<feature type="binding site" evidence="1">
    <location>
        <position position="327"/>
    </location>
    <ligand>
        <name>substrate</name>
    </ligand>
</feature>
<feature type="site" description="Transition state stabilizer" evidence="1">
    <location>
        <position position="77"/>
    </location>
</feature>
<comment type="function">
    <text evidence="1">Catalyzes the decarboxylation of four acetate groups of uroporphyrinogen-III to yield coproporphyrinogen-III.</text>
</comment>
<comment type="catalytic activity">
    <reaction evidence="1">
        <text>uroporphyrinogen III + 4 H(+) = coproporphyrinogen III + 4 CO2</text>
        <dbReference type="Rhea" id="RHEA:19865"/>
        <dbReference type="ChEBI" id="CHEBI:15378"/>
        <dbReference type="ChEBI" id="CHEBI:16526"/>
        <dbReference type="ChEBI" id="CHEBI:57308"/>
        <dbReference type="ChEBI" id="CHEBI:57309"/>
        <dbReference type="EC" id="4.1.1.37"/>
    </reaction>
</comment>
<comment type="pathway">
    <text evidence="1">Porphyrin-containing compound metabolism; protoporphyrin-IX biosynthesis; coproporphyrinogen-III from 5-aminolevulinate: step 4/4.</text>
</comment>
<comment type="subunit">
    <text evidence="1">Homodimer.</text>
</comment>
<comment type="subcellular location">
    <subcellularLocation>
        <location evidence="1">Cytoplasm</location>
    </subcellularLocation>
</comment>
<comment type="similarity">
    <text evidence="1">Belongs to the uroporphyrinogen decarboxylase family.</text>
</comment>
<gene>
    <name evidence="1" type="primary">hemE</name>
    <name type="ordered locus">HCH_05963</name>
</gene>
<protein>
    <recommendedName>
        <fullName evidence="1">Uroporphyrinogen decarboxylase</fullName>
        <shortName evidence="1">UPD</shortName>
        <shortName evidence="1">URO-D</shortName>
        <ecNumber evidence="1">4.1.1.37</ecNumber>
    </recommendedName>
</protein>
<sequence>MSELKNDRFLRALMRQPVDVTPVWMMRQAGRYLPEYRASRARAGSFMDLCKNAEFACEVTLQPLERFELDAAILFSDILTIPDAMGLGLYFETGEGPRFKKTVRTEADVNALHMPDADTDLGYVMNAVRTIRRELNGRVPLIGFSGSPWTLATYMVEGGSSKDFREIKKLAYGQPELLHLLLDKLADSVADYLNAQIRAGAQAVQIFDTWGGALTAAGYLEFSLAYMKKIVSKLQREADGRPVPVILFTKNGGQWLEHIADAGADALGLDWTTEISEARRRVGDRVSLQGNMDPAALYAPPAAIRDQVSRILASFGSGSGHVFNLGHGITPDVDPEHAKVFIDAVHELSAPYHQNA</sequence>